<gene>
    <name evidence="1" type="primary">efp</name>
    <name type="ordered locus">SG4177</name>
</gene>
<reference key="1">
    <citation type="journal article" date="2008" name="Genome Res.">
        <title>Comparative genome analysis of Salmonella enteritidis PT4 and Salmonella gallinarum 287/91 provides insights into evolutionary and host adaptation pathways.</title>
        <authorList>
            <person name="Thomson N.R."/>
            <person name="Clayton D.J."/>
            <person name="Windhorst D."/>
            <person name="Vernikos G."/>
            <person name="Davidson S."/>
            <person name="Churcher C."/>
            <person name="Quail M.A."/>
            <person name="Stevens M."/>
            <person name="Jones M.A."/>
            <person name="Watson M."/>
            <person name="Barron A."/>
            <person name="Layton A."/>
            <person name="Pickard D."/>
            <person name="Kingsley R.A."/>
            <person name="Bignell A."/>
            <person name="Clark L."/>
            <person name="Harris B."/>
            <person name="Ormond D."/>
            <person name="Abdellah Z."/>
            <person name="Brooks K."/>
            <person name="Cherevach I."/>
            <person name="Chillingworth T."/>
            <person name="Woodward J."/>
            <person name="Norberczak H."/>
            <person name="Lord A."/>
            <person name="Arrowsmith C."/>
            <person name="Jagels K."/>
            <person name="Moule S."/>
            <person name="Mungall K."/>
            <person name="Saunders M."/>
            <person name="Whitehead S."/>
            <person name="Chabalgoity J.A."/>
            <person name="Maskell D."/>
            <person name="Humphreys T."/>
            <person name="Roberts M."/>
            <person name="Barrow P.A."/>
            <person name="Dougan G."/>
            <person name="Parkhill J."/>
        </authorList>
    </citation>
    <scope>NUCLEOTIDE SEQUENCE [LARGE SCALE GENOMIC DNA]</scope>
    <source>
        <strain>287/91 / NCTC 13346</strain>
    </source>
</reference>
<sequence>MATYYSNDFRSGLKIMLDGEPYAVESSEFVKPGKGQAFARVKLRRLLTGTRVEKTFKSTDSAEGADVVDMNLTYLYNDGEFWHFMNNETFEQLSADAKAIGDNAKWLLDQAECIVTLWNGQPISVTPPNFVELEIVDTDPGLKGDTAGTGGKPATLSTGAVVKVPLFVQIGEVIKVDTRSGEYVSRVK</sequence>
<organism>
    <name type="scientific">Salmonella gallinarum (strain 287/91 / NCTC 13346)</name>
    <dbReference type="NCBI Taxonomy" id="550538"/>
    <lineage>
        <taxon>Bacteria</taxon>
        <taxon>Pseudomonadati</taxon>
        <taxon>Pseudomonadota</taxon>
        <taxon>Gammaproteobacteria</taxon>
        <taxon>Enterobacterales</taxon>
        <taxon>Enterobacteriaceae</taxon>
        <taxon>Salmonella</taxon>
    </lineage>
</organism>
<name>EFP_SALG2</name>
<protein>
    <recommendedName>
        <fullName evidence="1">Elongation factor P</fullName>
        <shortName evidence="1">EF-P</shortName>
    </recommendedName>
</protein>
<comment type="function">
    <text evidence="1">Involved in peptide bond synthesis. Alleviates ribosome stalling that occurs when 3 or more consecutive Pro residues or the sequence PPG is present in a protein, possibly by augmenting the peptidyl transferase activity of the ribosome. Modification of Lys-34 is required for alleviation.</text>
</comment>
<comment type="pathway">
    <text evidence="1">Protein biosynthesis; polypeptide chain elongation.</text>
</comment>
<comment type="subcellular location">
    <subcellularLocation>
        <location evidence="1">Cytoplasm</location>
    </subcellularLocation>
</comment>
<comment type="PTM">
    <text evidence="1">Is beta-lysylated on the epsilon-amino group of Lys-34 by the combined action of EpmA and EpmB, and then hydroxylated on the C5 position of the same residue by EpmC. Lysylation is critical for the stimulatory effect of EF-P on peptide-bond formation. The lysylation moiety would extend toward the peptidyltransferase center and stabilize the terminal 3-CCA end of the tRNA. The hydroxylation of the C5 position on Lys-34 would allow additional potential stabilizing hydrogen-bond interactions with the P-tRNA.</text>
</comment>
<comment type="similarity">
    <text evidence="1">Belongs to the elongation factor P family.</text>
</comment>
<evidence type="ECO:0000255" key="1">
    <source>
        <dbReference type="HAMAP-Rule" id="MF_00141"/>
    </source>
</evidence>
<feature type="chain" id="PRO_1000096200" description="Elongation factor P">
    <location>
        <begin position="1"/>
        <end position="188"/>
    </location>
</feature>
<feature type="modified residue" description="N6-(3,6-diaminohexanoyl)-5-hydroxylysine" evidence="1">
    <location>
        <position position="34"/>
    </location>
</feature>
<accession>B5R995</accession>
<keyword id="KW-0963">Cytoplasm</keyword>
<keyword id="KW-0251">Elongation factor</keyword>
<keyword id="KW-0379">Hydroxylation</keyword>
<keyword id="KW-0648">Protein biosynthesis</keyword>
<dbReference type="EMBL" id="AM933173">
    <property type="protein sequence ID" value="CAR39943.1"/>
    <property type="molecule type" value="Genomic_DNA"/>
</dbReference>
<dbReference type="RefSeq" id="WP_000257282.1">
    <property type="nucleotide sequence ID" value="NC_011274.1"/>
</dbReference>
<dbReference type="SMR" id="B5R995"/>
<dbReference type="GeneID" id="66758562"/>
<dbReference type="KEGG" id="seg:SG4177"/>
<dbReference type="HOGENOM" id="CLU_074944_0_0_6"/>
<dbReference type="UniPathway" id="UPA00345"/>
<dbReference type="Proteomes" id="UP000008321">
    <property type="component" value="Chromosome"/>
</dbReference>
<dbReference type="GO" id="GO:0005829">
    <property type="term" value="C:cytosol"/>
    <property type="evidence" value="ECO:0007669"/>
    <property type="project" value="UniProtKB-ARBA"/>
</dbReference>
<dbReference type="GO" id="GO:0003746">
    <property type="term" value="F:translation elongation factor activity"/>
    <property type="evidence" value="ECO:0007669"/>
    <property type="project" value="UniProtKB-UniRule"/>
</dbReference>
<dbReference type="GO" id="GO:0043043">
    <property type="term" value="P:peptide biosynthetic process"/>
    <property type="evidence" value="ECO:0007669"/>
    <property type="project" value="InterPro"/>
</dbReference>
<dbReference type="CDD" id="cd04470">
    <property type="entry name" value="S1_EF-P_repeat_1"/>
    <property type="match status" value="1"/>
</dbReference>
<dbReference type="CDD" id="cd05794">
    <property type="entry name" value="S1_EF-P_repeat_2"/>
    <property type="match status" value="1"/>
</dbReference>
<dbReference type="FunFam" id="2.30.30.30:FF:000003">
    <property type="entry name" value="Elongation factor P"/>
    <property type="match status" value="1"/>
</dbReference>
<dbReference type="FunFam" id="2.40.50.140:FF:000004">
    <property type="entry name" value="Elongation factor P"/>
    <property type="match status" value="1"/>
</dbReference>
<dbReference type="FunFam" id="2.40.50.140:FF:000009">
    <property type="entry name" value="Elongation factor P"/>
    <property type="match status" value="1"/>
</dbReference>
<dbReference type="Gene3D" id="2.30.30.30">
    <property type="match status" value="1"/>
</dbReference>
<dbReference type="Gene3D" id="2.40.50.140">
    <property type="entry name" value="Nucleic acid-binding proteins"/>
    <property type="match status" value="2"/>
</dbReference>
<dbReference type="HAMAP" id="MF_00141">
    <property type="entry name" value="EF_P"/>
    <property type="match status" value="1"/>
</dbReference>
<dbReference type="InterPro" id="IPR015365">
    <property type="entry name" value="Elong-fact-P_C"/>
</dbReference>
<dbReference type="InterPro" id="IPR012340">
    <property type="entry name" value="NA-bd_OB-fold"/>
</dbReference>
<dbReference type="InterPro" id="IPR014722">
    <property type="entry name" value="Rib_uL2_dom2"/>
</dbReference>
<dbReference type="InterPro" id="IPR020599">
    <property type="entry name" value="Transl_elong_fac_P/YeiP"/>
</dbReference>
<dbReference type="InterPro" id="IPR013185">
    <property type="entry name" value="Transl_elong_KOW-like"/>
</dbReference>
<dbReference type="InterPro" id="IPR001059">
    <property type="entry name" value="Transl_elong_P/YeiP_cen"/>
</dbReference>
<dbReference type="InterPro" id="IPR013852">
    <property type="entry name" value="Transl_elong_P/YeiP_CS"/>
</dbReference>
<dbReference type="InterPro" id="IPR011768">
    <property type="entry name" value="Transl_elongation_fac_P"/>
</dbReference>
<dbReference type="InterPro" id="IPR008991">
    <property type="entry name" value="Translation_prot_SH3-like_sf"/>
</dbReference>
<dbReference type="NCBIfam" id="TIGR00038">
    <property type="entry name" value="efp"/>
    <property type="match status" value="1"/>
</dbReference>
<dbReference type="NCBIfam" id="NF001810">
    <property type="entry name" value="PRK00529.1"/>
    <property type="match status" value="1"/>
</dbReference>
<dbReference type="PANTHER" id="PTHR30053">
    <property type="entry name" value="ELONGATION FACTOR P"/>
    <property type="match status" value="1"/>
</dbReference>
<dbReference type="PANTHER" id="PTHR30053:SF12">
    <property type="entry name" value="ELONGATION FACTOR P (EF-P) FAMILY PROTEIN"/>
    <property type="match status" value="1"/>
</dbReference>
<dbReference type="Pfam" id="PF01132">
    <property type="entry name" value="EFP"/>
    <property type="match status" value="1"/>
</dbReference>
<dbReference type="Pfam" id="PF08207">
    <property type="entry name" value="EFP_N"/>
    <property type="match status" value="1"/>
</dbReference>
<dbReference type="Pfam" id="PF09285">
    <property type="entry name" value="Elong-fact-P_C"/>
    <property type="match status" value="1"/>
</dbReference>
<dbReference type="PIRSF" id="PIRSF005901">
    <property type="entry name" value="EF-P"/>
    <property type="match status" value="1"/>
</dbReference>
<dbReference type="SMART" id="SM01185">
    <property type="entry name" value="EFP"/>
    <property type="match status" value="1"/>
</dbReference>
<dbReference type="SMART" id="SM00841">
    <property type="entry name" value="Elong-fact-P_C"/>
    <property type="match status" value="1"/>
</dbReference>
<dbReference type="SUPFAM" id="SSF50249">
    <property type="entry name" value="Nucleic acid-binding proteins"/>
    <property type="match status" value="2"/>
</dbReference>
<dbReference type="SUPFAM" id="SSF50104">
    <property type="entry name" value="Translation proteins SH3-like domain"/>
    <property type="match status" value="1"/>
</dbReference>
<dbReference type="PROSITE" id="PS01275">
    <property type="entry name" value="EFP"/>
    <property type="match status" value="1"/>
</dbReference>
<proteinExistence type="inferred from homology"/>